<keyword id="KW-0963">Cytoplasm</keyword>
<keyword id="KW-0233">DNA recombination</keyword>
<accession>Q3KFP5</accession>
<evidence type="ECO:0000255" key="1">
    <source>
        <dbReference type="HAMAP-Rule" id="MF_00194"/>
    </source>
</evidence>
<comment type="function">
    <text evidence="1">May be involved in recombination.</text>
</comment>
<comment type="subcellular location">
    <subcellularLocation>
        <location evidence="1">Cytoplasm</location>
        <location evidence="1">Nucleoid</location>
    </subcellularLocation>
</comment>
<comment type="similarity">
    <text evidence="1">Belongs to the RdgC family.</text>
</comment>
<organism>
    <name type="scientific">Pseudomonas fluorescens (strain Pf0-1)</name>
    <dbReference type="NCBI Taxonomy" id="205922"/>
    <lineage>
        <taxon>Bacteria</taxon>
        <taxon>Pseudomonadati</taxon>
        <taxon>Pseudomonadota</taxon>
        <taxon>Gammaproteobacteria</taxon>
        <taxon>Pseudomonadales</taxon>
        <taxon>Pseudomonadaceae</taxon>
        <taxon>Pseudomonas</taxon>
    </lineage>
</organism>
<reference key="1">
    <citation type="journal article" date="2009" name="Genome Biol.">
        <title>Genomic and genetic analyses of diversity and plant interactions of Pseudomonas fluorescens.</title>
        <authorList>
            <person name="Silby M.W."/>
            <person name="Cerdeno-Tarraga A.M."/>
            <person name="Vernikos G.S."/>
            <person name="Giddens S.R."/>
            <person name="Jackson R.W."/>
            <person name="Preston G.M."/>
            <person name="Zhang X.-X."/>
            <person name="Moon C.D."/>
            <person name="Gehrig S.M."/>
            <person name="Godfrey S.A.C."/>
            <person name="Knight C.G."/>
            <person name="Malone J.G."/>
            <person name="Robinson Z."/>
            <person name="Spiers A.J."/>
            <person name="Harris S."/>
            <person name="Challis G.L."/>
            <person name="Yaxley A.M."/>
            <person name="Harris D."/>
            <person name="Seeger K."/>
            <person name="Murphy L."/>
            <person name="Rutter S."/>
            <person name="Squares R."/>
            <person name="Quail M.A."/>
            <person name="Saunders E."/>
            <person name="Mavromatis K."/>
            <person name="Brettin T.S."/>
            <person name="Bentley S.D."/>
            <person name="Hothersall J."/>
            <person name="Stephens E."/>
            <person name="Thomas C.M."/>
            <person name="Parkhill J."/>
            <person name="Levy S.B."/>
            <person name="Rainey P.B."/>
            <person name="Thomson N.R."/>
        </authorList>
    </citation>
    <scope>NUCLEOTIDE SEQUENCE [LARGE SCALE GENOMIC DNA]</scope>
    <source>
        <strain>Pf0-1</strain>
    </source>
</reference>
<proteinExistence type="inferred from homology"/>
<feature type="chain" id="PRO_1000021222" description="Recombination-associated protein RdgC">
    <location>
        <begin position="1"/>
        <end position="306"/>
    </location>
</feature>
<dbReference type="EMBL" id="CP000094">
    <property type="protein sequence ID" value="ABA73411.1"/>
    <property type="molecule type" value="Genomic_DNA"/>
</dbReference>
<dbReference type="RefSeq" id="WP_007950430.1">
    <property type="nucleotide sequence ID" value="NC_007492.2"/>
</dbReference>
<dbReference type="SMR" id="Q3KFP5"/>
<dbReference type="KEGG" id="pfo:Pfl01_1668"/>
<dbReference type="eggNOG" id="COG2974">
    <property type="taxonomic scope" value="Bacteria"/>
</dbReference>
<dbReference type="HOGENOM" id="CLU_052038_1_1_6"/>
<dbReference type="Proteomes" id="UP000002704">
    <property type="component" value="Chromosome"/>
</dbReference>
<dbReference type="GO" id="GO:0043590">
    <property type="term" value="C:bacterial nucleoid"/>
    <property type="evidence" value="ECO:0007669"/>
    <property type="project" value="TreeGrafter"/>
</dbReference>
<dbReference type="GO" id="GO:0005737">
    <property type="term" value="C:cytoplasm"/>
    <property type="evidence" value="ECO:0007669"/>
    <property type="project" value="UniProtKB-UniRule"/>
</dbReference>
<dbReference type="GO" id="GO:0003690">
    <property type="term" value="F:double-stranded DNA binding"/>
    <property type="evidence" value="ECO:0007669"/>
    <property type="project" value="TreeGrafter"/>
</dbReference>
<dbReference type="GO" id="GO:0006310">
    <property type="term" value="P:DNA recombination"/>
    <property type="evidence" value="ECO:0007669"/>
    <property type="project" value="UniProtKB-UniRule"/>
</dbReference>
<dbReference type="GO" id="GO:0000018">
    <property type="term" value="P:regulation of DNA recombination"/>
    <property type="evidence" value="ECO:0007669"/>
    <property type="project" value="TreeGrafter"/>
</dbReference>
<dbReference type="HAMAP" id="MF_00194">
    <property type="entry name" value="RdgC"/>
    <property type="match status" value="1"/>
</dbReference>
<dbReference type="InterPro" id="IPR007476">
    <property type="entry name" value="RdgC"/>
</dbReference>
<dbReference type="NCBIfam" id="NF001461">
    <property type="entry name" value="PRK00321.1-2"/>
    <property type="match status" value="1"/>
</dbReference>
<dbReference type="NCBIfam" id="NF001462">
    <property type="entry name" value="PRK00321.1-3"/>
    <property type="match status" value="1"/>
</dbReference>
<dbReference type="NCBIfam" id="NF001464">
    <property type="entry name" value="PRK00321.1-5"/>
    <property type="match status" value="1"/>
</dbReference>
<dbReference type="PANTHER" id="PTHR38103">
    <property type="entry name" value="RECOMBINATION-ASSOCIATED PROTEIN RDGC"/>
    <property type="match status" value="1"/>
</dbReference>
<dbReference type="PANTHER" id="PTHR38103:SF1">
    <property type="entry name" value="RECOMBINATION-ASSOCIATED PROTEIN RDGC"/>
    <property type="match status" value="1"/>
</dbReference>
<dbReference type="Pfam" id="PF04381">
    <property type="entry name" value="RdgC"/>
    <property type="match status" value="1"/>
</dbReference>
<name>RDGC_PSEPF</name>
<protein>
    <recommendedName>
        <fullName evidence="1">Recombination-associated protein RdgC</fullName>
    </recommendedName>
</protein>
<sequence length="306" mass="34123">MWFKNLLIYRLTQDLPVDAEALETALATKLARPCASQELTTYGFVAPFGKGEDAPLVHVSGDFLLISARKEERILPGSVVRDAVKEKVEEIEAEQMRKVYKKERDQIKDEIIQAFLPRAFIRRSSTFAAIAPKQGLILVNSASPKRAEDLLSTLREVIGTLPVRPLTVKTAPTAVMTEWVTTQQAAPDFFVLDECELRDTHEDGGIVRCKRQDLTSEEIQLHLSTGKVVTQLSLAWQDKLSFMLDDKMTVKRLKFEDLLQDQAEQDGGDEALGQLDASFTLMMLTFGDFLPALVEALGGEETPQGI</sequence>
<gene>
    <name evidence="1" type="primary">rdgC</name>
    <name type="ordered locus">Pfl01_1668</name>
</gene>